<accession>B1IMV3</accession>
<proteinExistence type="inferred from homology"/>
<protein>
    <recommendedName>
        <fullName evidence="1">Threonine--tRNA ligase</fullName>
        <ecNumber evidence="1">6.1.1.3</ecNumber>
    </recommendedName>
    <alternativeName>
        <fullName evidence="1">Threonyl-tRNA synthetase</fullName>
        <shortName evidence="1">ThrRS</shortName>
    </alternativeName>
</protein>
<sequence>MIKITLKDGKVMEFEEGIKISDIAMKISPALYKKALAAKIDGETMDLMTELHKDSSLEILTFEDEMGKWALRHTGAHILAQAVKRLYPEVKLAIGPAIDTGFYYDFEADFTFTPEILEKIEAEIKKIIKENHKLERFELPREEAINLMKENNEDYKVELIEDLPEGEVISFYKQGDFTDLCAGPHVPSTGKVKSVKLLSLAGAYWRGNENNKMLQRIYGTAFTKKSELDEYLNMLEEAKKRDHRKLGKELDLFSIHEEGPGFPFFHPKGMIVRNILESFWREEHTKAGYQEIRTPLILNEALWHQSGHWDHYKENMYFTNIDDGDYAIKPMNCPGGILVYKNSMHSYRDLPLRLSELGIVHRHELSGALHGLMRVRCFTQDDAHLYMTKEQIKEEVVGIIKLIDKFYKLFGFEYFVELSTRPEDSMGSDEDWEIATNGLKEALDSIGKEYRVNEGDGAFYGPKIDFHLKDCIGRTWQCGTIQLDFQMPERFDLSYIGADGEKHRPVMVHRTIYGSVERFIGILIEQYAGAFPTWLAPVQVKLMNITDAQYDYLKKVEETLKENNIRVEIDTRNEKIGYKIREAQLQKVPYMLILGDKEVEAGKVAVRSRKDGDLGAISLEEFIEKIKNEIKAKTN</sequence>
<keyword id="KW-0030">Aminoacyl-tRNA synthetase</keyword>
<keyword id="KW-0067">ATP-binding</keyword>
<keyword id="KW-0963">Cytoplasm</keyword>
<keyword id="KW-0436">Ligase</keyword>
<keyword id="KW-0479">Metal-binding</keyword>
<keyword id="KW-0547">Nucleotide-binding</keyword>
<keyword id="KW-0648">Protein biosynthesis</keyword>
<keyword id="KW-0694">RNA-binding</keyword>
<keyword id="KW-0820">tRNA-binding</keyword>
<keyword id="KW-0862">Zinc</keyword>
<comment type="function">
    <text evidence="1">Catalyzes the attachment of threonine to tRNA(Thr) in a two-step reaction: L-threonine is first activated by ATP to form Thr-AMP and then transferred to the acceptor end of tRNA(Thr). Also edits incorrectly charged L-seryl-tRNA(Thr).</text>
</comment>
<comment type="catalytic activity">
    <reaction evidence="1">
        <text>tRNA(Thr) + L-threonine + ATP = L-threonyl-tRNA(Thr) + AMP + diphosphate + H(+)</text>
        <dbReference type="Rhea" id="RHEA:24624"/>
        <dbReference type="Rhea" id="RHEA-COMP:9670"/>
        <dbReference type="Rhea" id="RHEA-COMP:9704"/>
        <dbReference type="ChEBI" id="CHEBI:15378"/>
        <dbReference type="ChEBI" id="CHEBI:30616"/>
        <dbReference type="ChEBI" id="CHEBI:33019"/>
        <dbReference type="ChEBI" id="CHEBI:57926"/>
        <dbReference type="ChEBI" id="CHEBI:78442"/>
        <dbReference type="ChEBI" id="CHEBI:78534"/>
        <dbReference type="ChEBI" id="CHEBI:456215"/>
        <dbReference type="EC" id="6.1.1.3"/>
    </reaction>
</comment>
<comment type="cofactor">
    <cofactor evidence="1">
        <name>Zn(2+)</name>
        <dbReference type="ChEBI" id="CHEBI:29105"/>
    </cofactor>
    <text evidence="1">Binds 1 zinc ion per subunit.</text>
</comment>
<comment type="subunit">
    <text evidence="1">Homodimer.</text>
</comment>
<comment type="subcellular location">
    <subcellularLocation>
        <location evidence="1">Cytoplasm</location>
    </subcellularLocation>
</comment>
<comment type="similarity">
    <text evidence="1">Belongs to the class-II aminoacyl-tRNA synthetase family.</text>
</comment>
<feature type="chain" id="PRO_1000098562" description="Threonine--tRNA ligase">
    <location>
        <begin position="1"/>
        <end position="635"/>
    </location>
</feature>
<feature type="domain" description="TGS" evidence="2">
    <location>
        <begin position="1"/>
        <end position="61"/>
    </location>
</feature>
<feature type="region of interest" description="Catalytic" evidence="1">
    <location>
        <begin position="242"/>
        <end position="532"/>
    </location>
</feature>
<feature type="binding site" evidence="1">
    <location>
        <position position="333"/>
    </location>
    <ligand>
        <name>Zn(2+)</name>
        <dbReference type="ChEBI" id="CHEBI:29105"/>
    </ligand>
</feature>
<feature type="binding site" evidence="1">
    <location>
        <position position="384"/>
    </location>
    <ligand>
        <name>Zn(2+)</name>
        <dbReference type="ChEBI" id="CHEBI:29105"/>
    </ligand>
</feature>
<feature type="binding site" evidence="1">
    <location>
        <position position="509"/>
    </location>
    <ligand>
        <name>Zn(2+)</name>
        <dbReference type="ChEBI" id="CHEBI:29105"/>
    </ligand>
</feature>
<evidence type="ECO:0000255" key="1">
    <source>
        <dbReference type="HAMAP-Rule" id="MF_00184"/>
    </source>
</evidence>
<evidence type="ECO:0000255" key="2">
    <source>
        <dbReference type="PROSITE-ProRule" id="PRU01228"/>
    </source>
</evidence>
<gene>
    <name evidence="1" type="primary">thrS</name>
    <name type="ordered locus">CLD_1403</name>
</gene>
<dbReference type="EC" id="6.1.1.3" evidence="1"/>
<dbReference type="EMBL" id="CP000939">
    <property type="protein sequence ID" value="ACA43303.1"/>
    <property type="molecule type" value="Genomic_DNA"/>
</dbReference>
<dbReference type="RefSeq" id="WP_003403394.1">
    <property type="nucleotide sequence ID" value="NC_010516.1"/>
</dbReference>
<dbReference type="SMR" id="B1IMV3"/>
<dbReference type="KEGG" id="cbb:CLD_1403"/>
<dbReference type="HOGENOM" id="CLU_008554_0_1_9"/>
<dbReference type="Proteomes" id="UP000008541">
    <property type="component" value="Chromosome"/>
</dbReference>
<dbReference type="GO" id="GO:0005737">
    <property type="term" value="C:cytoplasm"/>
    <property type="evidence" value="ECO:0007669"/>
    <property type="project" value="UniProtKB-SubCell"/>
</dbReference>
<dbReference type="GO" id="GO:0005524">
    <property type="term" value="F:ATP binding"/>
    <property type="evidence" value="ECO:0007669"/>
    <property type="project" value="UniProtKB-UniRule"/>
</dbReference>
<dbReference type="GO" id="GO:0140096">
    <property type="term" value="F:catalytic activity, acting on a protein"/>
    <property type="evidence" value="ECO:0007669"/>
    <property type="project" value="UniProtKB-ARBA"/>
</dbReference>
<dbReference type="GO" id="GO:0046872">
    <property type="term" value="F:metal ion binding"/>
    <property type="evidence" value="ECO:0007669"/>
    <property type="project" value="UniProtKB-KW"/>
</dbReference>
<dbReference type="GO" id="GO:0004829">
    <property type="term" value="F:threonine-tRNA ligase activity"/>
    <property type="evidence" value="ECO:0007669"/>
    <property type="project" value="UniProtKB-UniRule"/>
</dbReference>
<dbReference type="GO" id="GO:0016740">
    <property type="term" value="F:transferase activity"/>
    <property type="evidence" value="ECO:0007669"/>
    <property type="project" value="UniProtKB-ARBA"/>
</dbReference>
<dbReference type="GO" id="GO:0000049">
    <property type="term" value="F:tRNA binding"/>
    <property type="evidence" value="ECO:0007669"/>
    <property type="project" value="UniProtKB-KW"/>
</dbReference>
<dbReference type="GO" id="GO:0006435">
    <property type="term" value="P:threonyl-tRNA aminoacylation"/>
    <property type="evidence" value="ECO:0007669"/>
    <property type="project" value="UniProtKB-UniRule"/>
</dbReference>
<dbReference type="CDD" id="cd01667">
    <property type="entry name" value="TGS_ThrRS"/>
    <property type="match status" value="1"/>
</dbReference>
<dbReference type="CDD" id="cd00860">
    <property type="entry name" value="ThrRS_anticodon"/>
    <property type="match status" value="1"/>
</dbReference>
<dbReference type="CDD" id="cd00771">
    <property type="entry name" value="ThrRS_core"/>
    <property type="match status" value="1"/>
</dbReference>
<dbReference type="FunFam" id="3.10.20.30:FF:000005">
    <property type="entry name" value="Threonine--tRNA ligase"/>
    <property type="match status" value="1"/>
</dbReference>
<dbReference type="FunFam" id="3.30.54.20:FF:000002">
    <property type="entry name" value="Threonine--tRNA ligase"/>
    <property type="match status" value="1"/>
</dbReference>
<dbReference type="FunFam" id="3.30.930.10:FF:000002">
    <property type="entry name" value="Threonine--tRNA ligase"/>
    <property type="match status" value="1"/>
</dbReference>
<dbReference type="FunFam" id="3.40.50.800:FF:000001">
    <property type="entry name" value="Threonine--tRNA ligase"/>
    <property type="match status" value="1"/>
</dbReference>
<dbReference type="FunFam" id="3.30.980.10:FF:000005">
    <property type="entry name" value="Threonyl-tRNA synthetase, mitochondrial"/>
    <property type="match status" value="1"/>
</dbReference>
<dbReference type="Gene3D" id="3.10.20.30">
    <property type="match status" value="1"/>
</dbReference>
<dbReference type="Gene3D" id="3.30.54.20">
    <property type="match status" value="1"/>
</dbReference>
<dbReference type="Gene3D" id="3.40.50.800">
    <property type="entry name" value="Anticodon-binding domain"/>
    <property type="match status" value="1"/>
</dbReference>
<dbReference type="Gene3D" id="3.30.930.10">
    <property type="entry name" value="Bira Bifunctional Protein, Domain 2"/>
    <property type="match status" value="1"/>
</dbReference>
<dbReference type="Gene3D" id="3.30.980.10">
    <property type="entry name" value="Threonyl-trna Synthetase, Chain A, domain 2"/>
    <property type="match status" value="1"/>
</dbReference>
<dbReference type="HAMAP" id="MF_00184">
    <property type="entry name" value="Thr_tRNA_synth"/>
    <property type="match status" value="1"/>
</dbReference>
<dbReference type="InterPro" id="IPR002314">
    <property type="entry name" value="aa-tRNA-synt_IIb"/>
</dbReference>
<dbReference type="InterPro" id="IPR006195">
    <property type="entry name" value="aa-tRNA-synth_II"/>
</dbReference>
<dbReference type="InterPro" id="IPR045864">
    <property type="entry name" value="aa-tRNA-synth_II/BPL/LPL"/>
</dbReference>
<dbReference type="InterPro" id="IPR004154">
    <property type="entry name" value="Anticodon-bd"/>
</dbReference>
<dbReference type="InterPro" id="IPR036621">
    <property type="entry name" value="Anticodon-bd_dom_sf"/>
</dbReference>
<dbReference type="InterPro" id="IPR012675">
    <property type="entry name" value="Beta-grasp_dom_sf"/>
</dbReference>
<dbReference type="InterPro" id="IPR004095">
    <property type="entry name" value="TGS"/>
</dbReference>
<dbReference type="InterPro" id="IPR012676">
    <property type="entry name" value="TGS-like"/>
</dbReference>
<dbReference type="InterPro" id="IPR002320">
    <property type="entry name" value="Thr-tRNA-ligase_IIa"/>
</dbReference>
<dbReference type="InterPro" id="IPR018163">
    <property type="entry name" value="Thr/Ala-tRNA-synth_IIc_edit"/>
</dbReference>
<dbReference type="InterPro" id="IPR047246">
    <property type="entry name" value="ThrRS_anticodon"/>
</dbReference>
<dbReference type="InterPro" id="IPR033728">
    <property type="entry name" value="ThrRS_core"/>
</dbReference>
<dbReference type="InterPro" id="IPR012947">
    <property type="entry name" value="tRNA_SAD"/>
</dbReference>
<dbReference type="NCBIfam" id="TIGR00418">
    <property type="entry name" value="thrS"/>
    <property type="match status" value="1"/>
</dbReference>
<dbReference type="PANTHER" id="PTHR11451:SF44">
    <property type="entry name" value="THREONINE--TRNA LIGASE, CHLOROPLASTIC_MITOCHONDRIAL 2"/>
    <property type="match status" value="1"/>
</dbReference>
<dbReference type="PANTHER" id="PTHR11451">
    <property type="entry name" value="THREONINE-TRNA LIGASE"/>
    <property type="match status" value="1"/>
</dbReference>
<dbReference type="Pfam" id="PF03129">
    <property type="entry name" value="HGTP_anticodon"/>
    <property type="match status" value="1"/>
</dbReference>
<dbReference type="Pfam" id="PF02824">
    <property type="entry name" value="TGS"/>
    <property type="match status" value="1"/>
</dbReference>
<dbReference type="Pfam" id="PF00587">
    <property type="entry name" value="tRNA-synt_2b"/>
    <property type="match status" value="1"/>
</dbReference>
<dbReference type="Pfam" id="PF07973">
    <property type="entry name" value="tRNA_SAD"/>
    <property type="match status" value="1"/>
</dbReference>
<dbReference type="PRINTS" id="PR01047">
    <property type="entry name" value="TRNASYNTHTHR"/>
</dbReference>
<dbReference type="SMART" id="SM00863">
    <property type="entry name" value="tRNA_SAD"/>
    <property type="match status" value="1"/>
</dbReference>
<dbReference type="SUPFAM" id="SSF52954">
    <property type="entry name" value="Class II aaRS ABD-related"/>
    <property type="match status" value="1"/>
</dbReference>
<dbReference type="SUPFAM" id="SSF55681">
    <property type="entry name" value="Class II aaRS and biotin synthetases"/>
    <property type="match status" value="1"/>
</dbReference>
<dbReference type="SUPFAM" id="SSF81271">
    <property type="entry name" value="TGS-like"/>
    <property type="match status" value="1"/>
</dbReference>
<dbReference type="SUPFAM" id="SSF55186">
    <property type="entry name" value="ThrRS/AlaRS common domain"/>
    <property type="match status" value="1"/>
</dbReference>
<dbReference type="PROSITE" id="PS50862">
    <property type="entry name" value="AA_TRNA_LIGASE_II"/>
    <property type="match status" value="1"/>
</dbReference>
<dbReference type="PROSITE" id="PS51880">
    <property type="entry name" value="TGS"/>
    <property type="match status" value="1"/>
</dbReference>
<organism>
    <name type="scientific">Clostridium botulinum (strain Okra / Type B1)</name>
    <dbReference type="NCBI Taxonomy" id="498213"/>
    <lineage>
        <taxon>Bacteria</taxon>
        <taxon>Bacillati</taxon>
        <taxon>Bacillota</taxon>
        <taxon>Clostridia</taxon>
        <taxon>Eubacteriales</taxon>
        <taxon>Clostridiaceae</taxon>
        <taxon>Clostridium</taxon>
    </lineage>
</organism>
<name>SYT_CLOBK</name>
<reference key="1">
    <citation type="journal article" date="2007" name="PLoS ONE">
        <title>Analysis of the neurotoxin complex genes in Clostridium botulinum A1-A4 and B1 strains: BoNT/A3, /Ba4 and /B1 clusters are located within plasmids.</title>
        <authorList>
            <person name="Smith T.J."/>
            <person name="Hill K.K."/>
            <person name="Foley B.T."/>
            <person name="Detter J.C."/>
            <person name="Munk A.C."/>
            <person name="Bruce D.C."/>
            <person name="Doggett N.A."/>
            <person name="Smith L.A."/>
            <person name="Marks J.D."/>
            <person name="Xie G."/>
            <person name="Brettin T.S."/>
        </authorList>
    </citation>
    <scope>NUCLEOTIDE SEQUENCE [LARGE SCALE GENOMIC DNA]</scope>
    <source>
        <strain>Okra / Type B1</strain>
    </source>
</reference>